<feature type="chain" id="PRO_1000081429" description="Small ribosomal subunit protein bS20">
    <location>
        <begin position="1"/>
        <end position="83"/>
    </location>
</feature>
<name>RS20_FLAJ1</name>
<sequence length="83" mass="9416">MANHKSALKRIRSNEKRRVLNRYQHKTTRNAIKALRLATDKSDAAAKLSTVISMIDKLAKKNIIHDNKASNLKSKLTKHVAKL</sequence>
<reference key="1">
    <citation type="journal article" date="2009" name="Appl. Environ. Microbiol.">
        <title>Novel features of the polysaccharide-digesting gliding bacterium Flavobacterium johnsoniae as revealed by genome sequence analysis.</title>
        <authorList>
            <person name="McBride M.J."/>
            <person name="Xie G."/>
            <person name="Martens E.C."/>
            <person name="Lapidus A."/>
            <person name="Henrissat B."/>
            <person name="Rhodes R.G."/>
            <person name="Goltsman E."/>
            <person name="Wang W."/>
            <person name="Xu J."/>
            <person name="Hunnicutt D.W."/>
            <person name="Staroscik A.M."/>
            <person name="Hoover T.R."/>
            <person name="Cheng Y.Q."/>
            <person name="Stein J.L."/>
        </authorList>
    </citation>
    <scope>NUCLEOTIDE SEQUENCE [LARGE SCALE GENOMIC DNA]</scope>
    <source>
        <strain>ATCC 17061 / DSM 2064 / JCM 8514 / BCRC 14874 / CCUG 350202 / NBRC 14942 / NCIMB 11054 / UW101</strain>
    </source>
</reference>
<organism>
    <name type="scientific">Flavobacterium johnsoniae (strain ATCC 17061 / DSM 2064 / JCM 8514 / BCRC 14874 / CCUG 350202 / NBRC 14942 / NCIMB 11054 / UW101)</name>
    <name type="common">Cytophaga johnsonae</name>
    <dbReference type="NCBI Taxonomy" id="376686"/>
    <lineage>
        <taxon>Bacteria</taxon>
        <taxon>Pseudomonadati</taxon>
        <taxon>Bacteroidota</taxon>
        <taxon>Flavobacteriia</taxon>
        <taxon>Flavobacteriales</taxon>
        <taxon>Flavobacteriaceae</taxon>
        <taxon>Flavobacterium</taxon>
    </lineage>
</organism>
<gene>
    <name evidence="1" type="primary">rpsT</name>
    <name type="ordered locus">Fjoh_4938</name>
</gene>
<evidence type="ECO:0000255" key="1">
    <source>
        <dbReference type="HAMAP-Rule" id="MF_00500"/>
    </source>
</evidence>
<evidence type="ECO:0000305" key="2"/>
<proteinExistence type="inferred from homology"/>
<protein>
    <recommendedName>
        <fullName evidence="1">Small ribosomal subunit protein bS20</fullName>
    </recommendedName>
    <alternativeName>
        <fullName evidence="2">30S ribosomal protein S20</fullName>
    </alternativeName>
</protein>
<accession>A5FA35</accession>
<comment type="function">
    <text evidence="1">Binds directly to 16S ribosomal RNA.</text>
</comment>
<comment type="similarity">
    <text evidence="1">Belongs to the bacterial ribosomal protein bS20 family.</text>
</comment>
<dbReference type="EMBL" id="CP000685">
    <property type="protein sequence ID" value="ABQ07937.1"/>
    <property type="molecule type" value="Genomic_DNA"/>
</dbReference>
<dbReference type="RefSeq" id="WP_012026903.1">
    <property type="nucleotide sequence ID" value="NZ_MUGZ01000004.1"/>
</dbReference>
<dbReference type="SMR" id="A5FA35"/>
<dbReference type="STRING" id="376686.Fjoh_4938"/>
<dbReference type="KEGG" id="fjo:Fjoh_4938"/>
<dbReference type="eggNOG" id="COG0268">
    <property type="taxonomic scope" value="Bacteria"/>
</dbReference>
<dbReference type="HOGENOM" id="CLU_160655_3_2_10"/>
<dbReference type="OrthoDB" id="9808392at2"/>
<dbReference type="Proteomes" id="UP000006694">
    <property type="component" value="Chromosome"/>
</dbReference>
<dbReference type="GO" id="GO:0005829">
    <property type="term" value="C:cytosol"/>
    <property type="evidence" value="ECO:0007669"/>
    <property type="project" value="TreeGrafter"/>
</dbReference>
<dbReference type="GO" id="GO:0015935">
    <property type="term" value="C:small ribosomal subunit"/>
    <property type="evidence" value="ECO:0007669"/>
    <property type="project" value="TreeGrafter"/>
</dbReference>
<dbReference type="GO" id="GO:0070181">
    <property type="term" value="F:small ribosomal subunit rRNA binding"/>
    <property type="evidence" value="ECO:0007669"/>
    <property type="project" value="TreeGrafter"/>
</dbReference>
<dbReference type="GO" id="GO:0003735">
    <property type="term" value="F:structural constituent of ribosome"/>
    <property type="evidence" value="ECO:0007669"/>
    <property type="project" value="InterPro"/>
</dbReference>
<dbReference type="GO" id="GO:0006412">
    <property type="term" value="P:translation"/>
    <property type="evidence" value="ECO:0007669"/>
    <property type="project" value="UniProtKB-UniRule"/>
</dbReference>
<dbReference type="Gene3D" id="1.20.58.110">
    <property type="entry name" value="Ribosomal protein S20"/>
    <property type="match status" value="1"/>
</dbReference>
<dbReference type="HAMAP" id="MF_00500">
    <property type="entry name" value="Ribosomal_bS20"/>
    <property type="match status" value="1"/>
</dbReference>
<dbReference type="InterPro" id="IPR002583">
    <property type="entry name" value="Ribosomal_bS20"/>
</dbReference>
<dbReference type="InterPro" id="IPR036510">
    <property type="entry name" value="Ribosomal_bS20_sf"/>
</dbReference>
<dbReference type="NCBIfam" id="TIGR00029">
    <property type="entry name" value="S20"/>
    <property type="match status" value="1"/>
</dbReference>
<dbReference type="PANTHER" id="PTHR33398">
    <property type="entry name" value="30S RIBOSOMAL PROTEIN S20"/>
    <property type="match status" value="1"/>
</dbReference>
<dbReference type="PANTHER" id="PTHR33398:SF1">
    <property type="entry name" value="SMALL RIBOSOMAL SUBUNIT PROTEIN BS20C"/>
    <property type="match status" value="1"/>
</dbReference>
<dbReference type="Pfam" id="PF01649">
    <property type="entry name" value="Ribosomal_S20p"/>
    <property type="match status" value="1"/>
</dbReference>
<dbReference type="SUPFAM" id="SSF46992">
    <property type="entry name" value="Ribosomal protein S20"/>
    <property type="match status" value="1"/>
</dbReference>
<keyword id="KW-0687">Ribonucleoprotein</keyword>
<keyword id="KW-0689">Ribosomal protein</keyword>
<keyword id="KW-0694">RNA-binding</keyword>
<keyword id="KW-0699">rRNA-binding</keyword>